<dbReference type="EC" id="6.1.1.15" evidence="1"/>
<dbReference type="EMBL" id="CP001132">
    <property type="protein sequence ID" value="ACH84012.1"/>
    <property type="molecule type" value="Genomic_DNA"/>
</dbReference>
<dbReference type="RefSeq" id="WP_009566247.1">
    <property type="nucleotide sequence ID" value="NC_011206.1"/>
</dbReference>
<dbReference type="SMR" id="B5EKH7"/>
<dbReference type="KEGG" id="afe:Lferr_1791"/>
<dbReference type="eggNOG" id="COG0442">
    <property type="taxonomic scope" value="Bacteria"/>
</dbReference>
<dbReference type="HOGENOM" id="CLU_016739_0_0_6"/>
<dbReference type="GO" id="GO:0005829">
    <property type="term" value="C:cytosol"/>
    <property type="evidence" value="ECO:0007669"/>
    <property type="project" value="TreeGrafter"/>
</dbReference>
<dbReference type="GO" id="GO:0002161">
    <property type="term" value="F:aminoacyl-tRNA deacylase activity"/>
    <property type="evidence" value="ECO:0007669"/>
    <property type="project" value="InterPro"/>
</dbReference>
<dbReference type="GO" id="GO:0005524">
    <property type="term" value="F:ATP binding"/>
    <property type="evidence" value="ECO:0007669"/>
    <property type="project" value="UniProtKB-UniRule"/>
</dbReference>
<dbReference type="GO" id="GO:0004827">
    <property type="term" value="F:proline-tRNA ligase activity"/>
    <property type="evidence" value="ECO:0007669"/>
    <property type="project" value="UniProtKB-UniRule"/>
</dbReference>
<dbReference type="GO" id="GO:0006433">
    <property type="term" value="P:prolyl-tRNA aminoacylation"/>
    <property type="evidence" value="ECO:0007669"/>
    <property type="project" value="UniProtKB-UniRule"/>
</dbReference>
<dbReference type="CDD" id="cd04334">
    <property type="entry name" value="ProRS-INS"/>
    <property type="match status" value="1"/>
</dbReference>
<dbReference type="CDD" id="cd00861">
    <property type="entry name" value="ProRS_anticodon_short"/>
    <property type="match status" value="1"/>
</dbReference>
<dbReference type="CDD" id="cd00779">
    <property type="entry name" value="ProRS_core_prok"/>
    <property type="match status" value="1"/>
</dbReference>
<dbReference type="FunFam" id="3.30.930.10:FF:000012">
    <property type="entry name" value="Proline--tRNA ligase"/>
    <property type="match status" value="1"/>
</dbReference>
<dbReference type="FunFam" id="3.30.930.10:FF:000065">
    <property type="entry name" value="Proline--tRNA ligase"/>
    <property type="match status" value="1"/>
</dbReference>
<dbReference type="Gene3D" id="3.40.50.800">
    <property type="entry name" value="Anticodon-binding domain"/>
    <property type="match status" value="1"/>
</dbReference>
<dbReference type="Gene3D" id="3.30.930.10">
    <property type="entry name" value="Bira Bifunctional Protein, Domain 2"/>
    <property type="match status" value="2"/>
</dbReference>
<dbReference type="Gene3D" id="3.90.960.10">
    <property type="entry name" value="YbaK/aminoacyl-tRNA synthetase-associated domain"/>
    <property type="match status" value="1"/>
</dbReference>
<dbReference type="HAMAP" id="MF_01569">
    <property type="entry name" value="Pro_tRNA_synth_type1"/>
    <property type="match status" value="1"/>
</dbReference>
<dbReference type="InterPro" id="IPR002314">
    <property type="entry name" value="aa-tRNA-synt_IIb"/>
</dbReference>
<dbReference type="InterPro" id="IPR006195">
    <property type="entry name" value="aa-tRNA-synth_II"/>
</dbReference>
<dbReference type="InterPro" id="IPR045864">
    <property type="entry name" value="aa-tRNA-synth_II/BPL/LPL"/>
</dbReference>
<dbReference type="InterPro" id="IPR004154">
    <property type="entry name" value="Anticodon-bd"/>
</dbReference>
<dbReference type="InterPro" id="IPR036621">
    <property type="entry name" value="Anticodon-bd_dom_sf"/>
</dbReference>
<dbReference type="InterPro" id="IPR002316">
    <property type="entry name" value="Pro-tRNA-ligase_IIa"/>
</dbReference>
<dbReference type="InterPro" id="IPR004500">
    <property type="entry name" value="Pro-tRNA-synth_IIa_bac-type"/>
</dbReference>
<dbReference type="InterPro" id="IPR023717">
    <property type="entry name" value="Pro-tRNA-Synthase_IIa_type1"/>
</dbReference>
<dbReference type="InterPro" id="IPR050062">
    <property type="entry name" value="Pro-tRNA_synthetase"/>
</dbReference>
<dbReference type="InterPro" id="IPR044140">
    <property type="entry name" value="ProRS_anticodon_short"/>
</dbReference>
<dbReference type="InterPro" id="IPR033730">
    <property type="entry name" value="ProRS_core_prok"/>
</dbReference>
<dbReference type="InterPro" id="IPR036754">
    <property type="entry name" value="YbaK/aa-tRNA-synt-asso_dom_sf"/>
</dbReference>
<dbReference type="InterPro" id="IPR007214">
    <property type="entry name" value="YbaK/aa-tRNA-synth-assoc-dom"/>
</dbReference>
<dbReference type="NCBIfam" id="NF006625">
    <property type="entry name" value="PRK09194.1"/>
    <property type="match status" value="1"/>
</dbReference>
<dbReference type="NCBIfam" id="TIGR00409">
    <property type="entry name" value="proS_fam_II"/>
    <property type="match status" value="1"/>
</dbReference>
<dbReference type="PANTHER" id="PTHR42753">
    <property type="entry name" value="MITOCHONDRIAL RIBOSOME PROTEIN L39/PROLYL-TRNA LIGASE FAMILY MEMBER"/>
    <property type="match status" value="1"/>
</dbReference>
<dbReference type="PANTHER" id="PTHR42753:SF2">
    <property type="entry name" value="PROLINE--TRNA LIGASE"/>
    <property type="match status" value="1"/>
</dbReference>
<dbReference type="Pfam" id="PF03129">
    <property type="entry name" value="HGTP_anticodon"/>
    <property type="match status" value="1"/>
</dbReference>
<dbReference type="Pfam" id="PF00587">
    <property type="entry name" value="tRNA-synt_2b"/>
    <property type="match status" value="1"/>
</dbReference>
<dbReference type="Pfam" id="PF04073">
    <property type="entry name" value="tRNA_edit"/>
    <property type="match status" value="1"/>
</dbReference>
<dbReference type="PIRSF" id="PIRSF001535">
    <property type="entry name" value="ProRS_1"/>
    <property type="match status" value="1"/>
</dbReference>
<dbReference type="PRINTS" id="PR01046">
    <property type="entry name" value="TRNASYNTHPRO"/>
</dbReference>
<dbReference type="SUPFAM" id="SSF52954">
    <property type="entry name" value="Class II aaRS ABD-related"/>
    <property type="match status" value="1"/>
</dbReference>
<dbReference type="SUPFAM" id="SSF55681">
    <property type="entry name" value="Class II aaRS and biotin synthetases"/>
    <property type="match status" value="1"/>
</dbReference>
<dbReference type="SUPFAM" id="SSF55826">
    <property type="entry name" value="YbaK/ProRS associated domain"/>
    <property type="match status" value="1"/>
</dbReference>
<dbReference type="PROSITE" id="PS50862">
    <property type="entry name" value="AA_TRNA_LIGASE_II"/>
    <property type="match status" value="1"/>
</dbReference>
<feature type="chain" id="PRO_1000199339" description="Proline--tRNA ligase">
    <location>
        <begin position="1"/>
        <end position="570"/>
    </location>
</feature>
<gene>
    <name evidence="1" type="primary">proS</name>
    <name type="ordered locus">Lferr_1791</name>
</gene>
<organism>
    <name type="scientific">Acidithiobacillus ferrooxidans (strain ATCC 53993 / BNL-5-31)</name>
    <name type="common">Leptospirillum ferrooxidans (ATCC 53993)</name>
    <dbReference type="NCBI Taxonomy" id="380394"/>
    <lineage>
        <taxon>Bacteria</taxon>
        <taxon>Pseudomonadati</taxon>
        <taxon>Pseudomonadota</taxon>
        <taxon>Acidithiobacillia</taxon>
        <taxon>Acidithiobacillales</taxon>
        <taxon>Acidithiobacillaceae</taxon>
        <taxon>Acidithiobacillus</taxon>
    </lineage>
</organism>
<name>SYP_ACIF5</name>
<accession>B5EKH7</accession>
<reference key="1">
    <citation type="submission" date="2008-08" db="EMBL/GenBank/DDBJ databases">
        <title>Complete sequence of Acidithiobacillus ferrooxidans ATCC 53993.</title>
        <authorList>
            <person name="Lucas S."/>
            <person name="Copeland A."/>
            <person name="Lapidus A."/>
            <person name="Glavina del Rio T."/>
            <person name="Dalin E."/>
            <person name="Tice H."/>
            <person name="Bruce D."/>
            <person name="Goodwin L."/>
            <person name="Pitluck S."/>
            <person name="Sims D."/>
            <person name="Brettin T."/>
            <person name="Detter J.C."/>
            <person name="Han C."/>
            <person name="Kuske C.R."/>
            <person name="Larimer F."/>
            <person name="Land M."/>
            <person name="Hauser L."/>
            <person name="Kyrpides N."/>
            <person name="Lykidis A."/>
            <person name="Borole A.P."/>
        </authorList>
    </citation>
    <scope>NUCLEOTIDE SEQUENCE [LARGE SCALE GENOMIC DNA]</scope>
    <source>
        <strain>ATCC 53993 / BNL-5-31</strain>
    </source>
</reference>
<proteinExistence type="inferred from homology"/>
<sequence length="570" mass="63598">MRASQIFIPTLKETPAEAELVSHQLLLRGGFIRRLASGLYTWMPLGLRVLRKVERVVREEMDRSGAQELLMPVVQPAELWQESGRWEQYGPELLRLRDRHDREFCLGPTHEEVISDLARREIHSYRQLPVNFYQIQTKFRDEIRPRFGLMRGREFIMKDAYSFHMDHSSLEITYQAMYEAYQRVFTRLGLSFRAVEADNGAIGGKRSHEFHVLADSGEDAIVSCHHCDYAANMEKAASRPDLAETEIPLAAERVRTPGIRTVAEQAEHLGIPTAKIVKTVLVVADGKTVMLLLRGDDELNLVKAGHALNAQDVQMARPEEAISATGAPLGFIGPKEPLLSIPILADHRALGVANFSTGANAADLHWINLNWDRDLPRPAAADLRNVRAGDACPHCAEGTLSIRRGIEVGHVFQLGERYSESMGITVLDETGRDATVTMGCYGIGVSRVVAAAVEQHFDDRGIIWPVALAPFEVGIVAINARKSPDVAAAAQALHDRLEAEGYSVLLDDRDERPGVQFATMDLVGLPHRIVVSDTVLAQGVWEYRARRTTENVLLDETQLMERLRKEHARG</sequence>
<comment type="function">
    <text evidence="1">Catalyzes the attachment of proline to tRNA(Pro) in a two-step reaction: proline is first activated by ATP to form Pro-AMP and then transferred to the acceptor end of tRNA(Pro). As ProRS can inadvertently accommodate and process non-cognate amino acids such as alanine and cysteine, to avoid such errors it has two additional distinct editing activities against alanine. One activity is designated as 'pretransfer' editing and involves the tRNA(Pro)-independent hydrolysis of activated Ala-AMP. The other activity is designated 'posttransfer' editing and involves deacylation of mischarged Ala-tRNA(Pro). The misacylated Cys-tRNA(Pro) is not edited by ProRS.</text>
</comment>
<comment type="catalytic activity">
    <reaction evidence="1">
        <text>tRNA(Pro) + L-proline + ATP = L-prolyl-tRNA(Pro) + AMP + diphosphate</text>
        <dbReference type="Rhea" id="RHEA:14305"/>
        <dbReference type="Rhea" id="RHEA-COMP:9700"/>
        <dbReference type="Rhea" id="RHEA-COMP:9702"/>
        <dbReference type="ChEBI" id="CHEBI:30616"/>
        <dbReference type="ChEBI" id="CHEBI:33019"/>
        <dbReference type="ChEBI" id="CHEBI:60039"/>
        <dbReference type="ChEBI" id="CHEBI:78442"/>
        <dbReference type="ChEBI" id="CHEBI:78532"/>
        <dbReference type="ChEBI" id="CHEBI:456215"/>
        <dbReference type="EC" id="6.1.1.15"/>
    </reaction>
</comment>
<comment type="subunit">
    <text evidence="1">Homodimer.</text>
</comment>
<comment type="subcellular location">
    <subcellularLocation>
        <location evidence="1">Cytoplasm</location>
    </subcellularLocation>
</comment>
<comment type="domain">
    <text evidence="1">Consists of three domains: the N-terminal catalytic domain, the editing domain and the C-terminal anticodon-binding domain.</text>
</comment>
<comment type="similarity">
    <text evidence="1">Belongs to the class-II aminoacyl-tRNA synthetase family. ProS type 1 subfamily.</text>
</comment>
<evidence type="ECO:0000255" key="1">
    <source>
        <dbReference type="HAMAP-Rule" id="MF_01569"/>
    </source>
</evidence>
<protein>
    <recommendedName>
        <fullName evidence="1">Proline--tRNA ligase</fullName>
        <ecNumber evidence="1">6.1.1.15</ecNumber>
    </recommendedName>
    <alternativeName>
        <fullName evidence="1">Prolyl-tRNA synthetase</fullName>
        <shortName evidence="1">ProRS</shortName>
    </alternativeName>
</protein>
<keyword id="KW-0030">Aminoacyl-tRNA synthetase</keyword>
<keyword id="KW-0067">ATP-binding</keyword>
<keyword id="KW-0963">Cytoplasm</keyword>
<keyword id="KW-0436">Ligase</keyword>
<keyword id="KW-0547">Nucleotide-binding</keyword>
<keyword id="KW-0648">Protein biosynthesis</keyword>